<reference key="1">
    <citation type="journal article" date="1997" name="J. Bacteriol.">
        <title>mucK, a gene in Acinetobacter calcoaceticus ADP1 (BD413), encodes the ability to grow on exogenous cis,cis-muconate as the sole carbon source.</title>
        <authorList>
            <person name="Williams P.A."/>
            <person name="Shaw L.E."/>
        </authorList>
    </citation>
    <scope>NUCLEOTIDE SEQUENCE [GENOMIC DNA]</scope>
</reference>
<reference key="2">
    <citation type="journal article" date="2004" name="Nucleic Acids Res.">
        <title>Unique features revealed by the genome sequence of Acinetobacter sp. ADP1, a versatile and naturally transformation competent bacterium.</title>
        <authorList>
            <person name="Barbe V."/>
            <person name="Vallenet D."/>
            <person name="Fonknechten N."/>
            <person name="Kreimeyer A."/>
            <person name="Oztas S."/>
            <person name="Labarre L."/>
            <person name="Cruveiller S."/>
            <person name="Robert C."/>
            <person name="Duprat S."/>
            <person name="Wincker P."/>
            <person name="Ornston L.N."/>
            <person name="Weissenbach J."/>
            <person name="Marliere P."/>
            <person name="Cohen G.N."/>
            <person name="Medigue C."/>
        </authorList>
    </citation>
    <scope>NUCLEOTIDE SEQUENCE [LARGE SCALE GENOMIC DNA]</scope>
    <source>
        <strain>ATCC 33305 / BD413 / ADP1</strain>
    </source>
</reference>
<organism>
    <name type="scientific">Acinetobacter baylyi (strain ATCC 33305 / BD413 / ADP1)</name>
    <dbReference type="NCBI Taxonomy" id="62977"/>
    <lineage>
        <taxon>Bacteria</taxon>
        <taxon>Pseudomonadati</taxon>
        <taxon>Pseudomonadota</taxon>
        <taxon>Gammaproteobacteria</taxon>
        <taxon>Moraxellales</taxon>
        <taxon>Moraxellaceae</taxon>
        <taxon>Acinetobacter</taxon>
    </lineage>
</organism>
<protein>
    <recommendedName>
        <fullName>Cis,cis-muconate transport protein</fullName>
    </recommendedName>
</protein>
<evidence type="ECO:0000255" key="1"/>
<evidence type="ECO:0000305" key="2"/>
<dbReference type="EMBL" id="U87258">
    <property type="protein sequence ID" value="AAC27117.1"/>
    <property type="molecule type" value="Genomic_DNA"/>
</dbReference>
<dbReference type="EMBL" id="CR543861">
    <property type="protein sequence ID" value="CAG68526.1"/>
    <property type="molecule type" value="Genomic_DNA"/>
</dbReference>
<dbReference type="RefSeq" id="WP_004926552.1">
    <property type="nucleotide sequence ID" value="NC_005966.1"/>
</dbReference>
<dbReference type="SMR" id="P94131"/>
<dbReference type="STRING" id="202950.GCA_001485005_03259"/>
<dbReference type="TCDB" id="2.A.1.15.4">
    <property type="family name" value="the major facilitator superfamily (mfs)"/>
</dbReference>
<dbReference type="GeneID" id="45234071"/>
<dbReference type="KEGG" id="aci:ACIAD1681"/>
<dbReference type="eggNOG" id="COG2814">
    <property type="taxonomic scope" value="Bacteria"/>
</dbReference>
<dbReference type="HOGENOM" id="CLU_001265_46_7_6"/>
<dbReference type="OrthoDB" id="4474610at2"/>
<dbReference type="BioCyc" id="ASP62977:ACIAD_RS07750-MONOMER"/>
<dbReference type="Proteomes" id="UP000000430">
    <property type="component" value="Chromosome"/>
</dbReference>
<dbReference type="GO" id="GO:0005886">
    <property type="term" value="C:plasma membrane"/>
    <property type="evidence" value="ECO:0007669"/>
    <property type="project" value="UniProtKB-SubCell"/>
</dbReference>
<dbReference type="GO" id="GO:0046943">
    <property type="term" value="F:carboxylic acid transmembrane transporter activity"/>
    <property type="evidence" value="ECO:0007669"/>
    <property type="project" value="TreeGrafter"/>
</dbReference>
<dbReference type="CDD" id="cd17371">
    <property type="entry name" value="MFS_MucK"/>
    <property type="match status" value="1"/>
</dbReference>
<dbReference type="Gene3D" id="1.20.1250.20">
    <property type="entry name" value="MFS general substrate transporter like domains"/>
    <property type="match status" value="1"/>
</dbReference>
<dbReference type="InterPro" id="IPR011701">
    <property type="entry name" value="MFS"/>
</dbReference>
<dbReference type="InterPro" id="IPR004746">
    <property type="entry name" value="MFS_AAHS"/>
</dbReference>
<dbReference type="InterPro" id="IPR020846">
    <property type="entry name" value="MFS_dom"/>
</dbReference>
<dbReference type="InterPro" id="IPR036259">
    <property type="entry name" value="MFS_trans_sf"/>
</dbReference>
<dbReference type="InterPro" id="IPR005829">
    <property type="entry name" value="Sugar_transporter_CS"/>
</dbReference>
<dbReference type="NCBIfam" id="TIGR00895">
    <property type="entry name" value="2A0115"/>
    <property type="match status" value="1"/>
</dbReference>
<dbReference type="PANTHER" id="PTHR23508">
    <property type="entry name" value="CARBOXYLIC ACID TRANSPORTER PROTEIN HOMOLOG"/>
    <property type="match status" value="1"/>
</dbReference>
<dbReference type="PANTHER" id="PTHR23508:SF10">
    <property type="entry name" value="CARBOXYLIC ACID TRANSPORTER PROTEIN HOMOLOG"/>
    <property type="match status" value="1"/>
</dbReference>
<dbReference type="Pfam" id="PF07690">
    <property type="entry name" value="MFS_1"/>
    <property type="match status" value="2"/>
</dbReference>
<dbReference type="SUPFAM" id="SSF103473">
    <property type="entry name" value="MFS general substrate transporter"/>
    <property type="match status" value="1"/>
</dbReference>
<dbReference type="PROSITE" id="PS50850">
    <property type="entry name" value="MFS"/>
    <property type="match status" value="1"/>
</dbReference>
<feature type="chain" id="PRO_0000050310" description="Cis,cis-muconate transport protein">
    <location>
        <begin position="1"/>
        <end position="413"/>
    </location>
</feature>
<feature type="topological domain" description="Cytoplasmic" evidence="1">
    <location>
        <begin position="1"/>
        <end position="16"/>
    </location>
</feature>
<feature type="transmembrane region" description="Helical; Name=1" evidence="1">
    <location>
        <begin position="17"/>
        <end position="37"/>
    </location>
</feature>
<feature type="topological domain" description="Periplasmic" evidence="1">
    <location>
        <begin position="38"/>
        <end position="53"/>
    </location>
</feature>
<feature type="transmembrane region" description="Helical; Name=2" evidence="1">
    <location>
        <begin position="54"/>
        <end position="74"/>
    </location>
</feature>
<feature type="topological domain" description="Cytoplasmic" evidence="1">
    <location>
        <begin position="75"/>
        <end position="85"/>
    </location>
</feature>
<feature type="transmembrane region" description="Helical; Name=3" evidence="1">
    <location>
        <begin position="86"/>
        <end position="106"/>
    </location>
</feature>
<feature type="topological domain" description="Periplasmic" evidence="1">
    <location>
        <begin position="107"/>
        <end position="112"/>
    </location>
</feature>
<feature type="transmembrane region" description="Helical; Name=4" evidence="1">
    <location>
        <begin position="113"/>
        <end position="133"/>
    </location>
</feature>
<feature type="topological domain" description="Cytoplasmic" evidence="1">
    <location>
        <begin position="134"/>
        <end position="145"/>
    </location>
</feature>
<feature type="transmembrane region" description="Helical; Name=5" evidence="1">
    <location>
        <begin position="146"/>
        <end position="166"/>
    </location>
</feature>
<feature type="topological domain" description="Periplasmic" evidence="1">
    <location>
        <begin position="167"/>
        <end position="171"/>
    </location>
</feature>
<feature type="transmembrane region" description="Helical; Name=6" evidence="1">
    <location>
        <begin position="172"/>
        <end position="192"/>
    </location>
</feature>
<feature type="topological domain" description="Cytoplasmic" evidence="1">
    <location>
        <begin position="193"/>
        <end position="228"/>
    </location>
</feature>
<feature type="transmembrane region" description="Helical; Name=7" evidence="1">
    <location>
        <begin position="229"/>
        <end position="249"/>
    </location>
</feature>
<feature type="topological domain" description="Periplasmic" evidence="1">
    <location>
        <begin position="250"/>
        <end position="266"/>
    </location>
</feature>
<feature type="transmembrane region" description="Helical; Name=8" evidence="1">
    <location>
        <begin position="267"/>
        <end position="287"/>
    </location>
</feature>
<feature type="topological domain" description="Cytoplasmic" evidence="1">
    <location>
        <begin position="288"/>
        <end position="293"/>
    </location>
</feature>
<feature type="transmembrane region" description="Helical; Name=9" evidence="1">
    <location>
        <begin position="294"/>
        <end position="314"/>
    </location>
</feature>
<feature type="topological domain" description="Periplasmic" evidence="1">
    <location>
        <begin position="315"/>
        <end position="318"/>
    </location>
</feature>
<feature type="transmembrane region" description="Helical; Name=10" evidence="1">
    <location>
        <begin position="319"/>
        <end position="339"/>
    </location>
</feature>
<feature type="topological domain" description="Cytoplasmic" evidence="1">
    <location>
        <begin position="340"/>
        <end position="352"/>
    </location>
</feature>
<feature type="transmembrane region" description="Helical; Name=11" evidence="1">
    <location>
        <begin position="353"/>
        <end position="376"/>
    </location>
</feature>
<feature type="topological domain" description="Periplasmic" evidence="1">
    <location>
        <begin position="377"/>
        <end position="382"/>
    </location>
</feature>
<feature type="transmembrane region" description="Helical; Name=12" evidence="1">
    <location>
        <begin position="383"/>
        <end position="403"/>
    </location>
</feature>
<feature type="topological domain" description="Cytoplasmic" evidence="1">
    <location>
        <begin position="404"/>
        <end position="413"/>
    </location>
</feature>
<accession>P94131</accession>
<proteinExistence type="inferred from homology"/>
<sequence length="413" mass="45245">MYSNNQRSRIGSHTWKIAFLFAFLALLVDGADLMLLSYSLNSIKAEFNLSTVEAGMLGSFTLAGMAIGGIFGGWACDRFGRVRIVVISILTFSILTCGLGLTQSFIQFGVLRFFASLGLGSLYIACNTLMAEYVPTKYRTTVLGTLQAGWTVGYIVATLLAGWLIPDHGWRVLFYVAIIPVLMAVLMHFFVPEPAAWQQSRLAPSKQTETVKTSAFKLIFQDKRNRNMFILWALTAGFLQFGYYGVNNWMPSYLESELGMKFKEMTAYMVGTYTAMILGKILAGFMADKLGRRFTYAFGAIGTAIFLPLIVFYNSPDNILYLLVIFGFLYGIPYGVNATYMTESFPTAIRGTAIGGAYNVGRLGAAIAPATIGFLASGGSIGLGFVVMGAAYFICGVIPALFIKEKQYDPQQS</sequence>
<gene>
    <name type="primary">mucK</name>
    <name type="ordered locus">ACIAD1681</name>
</gene>
<name>MUCK_ACIAD</name>
<comment type="function">
    <text>Probable uptake of muconate.</text>
</comment>
<comment type="subcellular location">
    <subcellularLocation>
        <location evidence="2">Cell inner membrane</location>
        <topology evidence="2">Multi-pass membrane protein</topology>
    </subcellularLocation>
</comment>
<comment type="similarity">
    <text evidence="2">Belongs to the major facilitator superfamily. Aromatic acid:H(+) symporter (AAHS) (TC 2.A.1.15) family.</text>
</comment>
<keyword id="KW-0997">Cell inner membrane</keyword>
<keyword id="KW-1003">Cell membrane</keyword>
<keyword id="KW-0472">Membrane</keyword>
<keyword id="KW-0812">Transmembrane</keyword>
<keyword id="KW-1133">Transmembrane helix</keyword>
<keyword id="KW-0813">Transport</keyword>